<protein>
    <recommendedName>
        <fullName evidence="1">Queuine tRNA-ribosyltransferase</fullName>
        <ecNumber evidence="1">2.4.2.29</ecNumber>
    </recommendedName>
    <alternativeName>
        <fullName evidence="1">Guanine insertion enzyme</fullName>
    </alternativeName>
    <alternativeName>
        <fullName evidence="1">tRNA-guanine transglycosylase</fullName>
    </alternativeName>
</protein>
<organism>
    <name type="scientific">Bacillus subtilis (strain 168)</name>
    <dbReference type="NCBI Taxonomy" id="224308"/>
    <lineage>
        <taxon>Bacteria</taxon>
        <taxon>Bacillati</taxon>
        <taxon>Bacillota</taxon>
        <taxon>Bacilli</taxon>
        <taxon>Bacillales</taxon>
        <taxon>Bacillaceae</taxon>
        <taxon>Bacillus</taxon>
    </lineage>
</organism>
<dbReference type="EC" id="2.4.2.29" evidence="1"/>
<dbReference type="EMBL" id="Y15896">
    <property type="protein sequence ID" value="CAB75333.1"/>
    <property type="molecule type" value="Genomic_DNA"/>
</dbReference>
<dbReference type="EMBL" id="AL009126">
    <property type="protein sequence ID" value="CAB14731.1"/>
    <property type="molecule type" value="Genomic_DNA"/>
</dbReference>
<dbReference type="PIR" id="B69722">
    <property type="entry name" value="B69722"/>
</dbReference>
<dbReference type="RefSeq" id="NP_390649.1">
    <property type="nucleotide sequence ID" value="NC_000964.3"/>
</dbReference>
<dbReference type="RefSeq" id="WP_003229725.1">
    <property type="nucleotide sequence ID" value="NZ_OZ025638.1"/>
</dbReference>
<dbReference type="SMR" id="O32053"/>
<dbReference type="FunCoup" id="O32053">
    <property type="interactions" value="711"/>
</dbReference>
<dbReference type="IntAct" id="O32053">
    <property type="interactions" value="1"/>
</dbReference>
<dbReference type="STRING" id="224308.BSU27710"/>
<dbReference type="jPOST" id="O32053"/>
<dbReference type="PaxDb" id="224308-BSU27710"/>
<dbReference type="EnsemblBacteria" id="CAB14731">
    <property type="protein sequence ID" value="CAB14731"/>
    <property type="gene ID" value="BSU_27710"/>
</dbReference>
<dbReference type="GeneID" id="937528"/>
<dbReference type="KEGG" id="bsu:BSU27710"/>
<dbReference type="PATRIC" id="fig|224308.179.peg.3010"/>
<dbReference type="eggNOG" id="COG0343">
    <property type="taxonomic scope" value="Bacteria"/>
</dbReference>
<dbReference type="InParanoid" id="O32053"/>
<dbReference type="OrthoDB" id="9805417at2"/>
<dbReference type="PhylomeDB" id="O32053"/>
<dbReference type="BioCyc" id="BSUB:BSU27710-MONOMER"/>
<dbReference type="UniPathway" id="UPA00392"/>
<dbReference type="Proteomes" id="UP000001570">
    <property type="component" value="Chromosome"/>
</dbReference>
<dbReference type="GO" id="GO:0005737">
    <property type="term" value="C:cytoplasm"/>
    <property type="evidence" value="ECO:0000318"/>
    <property type="project" value="GO_Central"/>
</dbReference>
<dbReference type="GO" id="GO:0005829">
    <property type="term" value="C:cytosol"/>
    <property type="evidence" value="ECO:0000318"/>
    <property type="project" value="GO_Central"/>
</dbReference>
<dbReference type="GO" id="GO:0046872">
    <property type="term" value="F:metal ion binding"/>
    <property type="evidence" value="ECO:0007669"/>
    <property type="project" value="UniProtKB-KW"/>
</dbReference>
<dbReference type="GO" id="GO:0008479">
    <property type="term" value="F:tRNA-guanosine(34) queuine transglycosylase activity"/>
    <property type="evidence" value="ECO:0007669"/>
    <property type="project" value="UniProtKB-UniRule"/>
</dbReference>
<dbReference type="GO" id="GO:0008616">
    <property type="term" value="P:queuosine biosynthetic process"/>
    <property type="evidence" value="ECO:0000318"/>
    <property type="project" value="GO_Central"/>
</dbReference>
<dbReference type="GO" id="GO:0002099">
    <property type="term" value="P:tRNA wobble guanine modification"/>
    <property type="evidence" value="ECO:0000318"/>
    <property type="project" value="GO_Central"/>
</dbReference>
<dbReference type="GO" id="GO:0101030">
    <property type="term" value="P:tRNA-guanine transglycosylation"/>
    <property type="evidence" value="ECO:0007669"/>
    <property type="project" value="InterPro"/>
</dbReference>
<dbReference type="FunFam" id="3.20.20.105:FF:000001">
    <property type="entry name" value="Queuine tRNA-ribosyltransferase"/>
    <property type="match status" value="1"/>
</dbReference>
<dbReference type="Gene3D" id="3.20.20.105">
    <property type="entry name" value="Queuine tRNA-ribosyltransferase-like"/>
    <property type="match status" value="1"/>
</dbReference>
<dbReference type="HAMAP" id="MF_00168">
    <property type="entry name" value="Q_tRNA_Tgt"/>
    <property type="match status" value="1"/>
</dbReference>
<dbReference type="InterPro" id="IPR050076">
    <property type="entry name" value="ArchSynthase1/Queuine_TRR"/>
</dbReference>
<dbReference type="InterPro" id="IPR004803">
    <property type="entry name" value="TGT"/>
</dbReference>
<dbReference type="InterPro" id="IPR036511">
    <property type="entry name" value="TGT-like_sf"/>
</dbReference>
<dbReference type="InterPro" id="IPR002616">
    <property type="entry name" value="tRNA_ribo_trans-like"/>
</dbReference>
<dbReference type="NCBIfam" id="TIGR00430">
    <property type="entry name" value="Q_tRNA_tgt"/>
    <property type="match status" value="1"/>
</dbReference>
<dbReference type="NCBIfam" id="TIGR00449">
    <property type="entry name" value="tgt_general"/>
    <property type="match status" value="1"/>
</dbReference>
<dbReference type="PANTHER" id="PTHR46499">
    <property type="entry name" value="QUEUINE TRNA-RIBOSYLTRANSFERASE"/>
    <property type="match status" value="1"/>
</dbReference>
<dbReference type="PANTHER" id="PTHR46499:SF1">
    <property type="entry name" value="QUEUINE TRNA-RIBOSYLTRANSFERASE"/>
    <property type="match status" value="1"/>
</dbReference>
<dbReference type="Pfam" id="PF01702">
    <property type="entry name" value="TGT"/>
    <property type="match status" value="1"/>
</dbReference>
<dbReference type="SUPFAM" id="SSF51713">
    <property type="entry name" value="tRNA-guanine transglycosylase"/>
    <property type="match status" value="1"/>
</dbReference>
<sequence>MAEQPIRYEFIKECKQTGARLGKVHTPHGSFETPVFMPVGTLATVKTMSPEELKAMDAGIILSNTYHLWLRPGQDIVKEAGGLHKFMNWDRAILTDSGGFQVFSLSKFRNIEEEGVHFRNHLNGDKLFLSPEKAMEIQNALGSDIMMAFDECPPYPAEYDYMKRSVERTSRWAERCLNAHNRQDEQGLFGIVQGGEYEDLRTQSAKDLISLDFPGYAIGGLSVGEPKDVMNRVLEFTTPLLPKDKPRYLMGVGSPDALIDGAIRGVDMFDCVLPTRIARNGTVFTAEGRLNMKNAKFERDFRPIDEECDCYTCKNYTRAYIRHLIRCNETFGLRLTTYHNLHFLLHLMEQVRQAIREDRLGDFREEFFERYGYNKPNAKSF</sequence>
<proteinExistence type="inferred from homology"/>
<evidence type="ECO:0000255" key="1">
    <source>
        <dbReference type="HAMAP-Rule" id="MF_00168"/>
    </source>
</evidence>
<comment type="function">
    <text evidence="1">Catalyzes the base-exchange of a guanine (G) residue with the queuine precursor 7-aminomethyl-7-deazaguanine (PreQ1) at position 34 (anticodon wobble position) in tRNAs with GU(N) anticodons (tRNA-Asp, -Asn, -His and -Tyr). Catalysis occurs through a double-displacement mechanism. The nucleophile active site attacks the C1' of nucleotide 34 to detach the guanine base from the RNA, forming a covalent enzyme-RNA intermediate. The proton acceptor active site deprotonates the incoming PreQ1, allowing a nucleophilic attack on the C1' of the ribose to form the product. After dissociation, two additional enzymatic reactions on the tRNA convert PreQ1 to queuine (Q), resulting in the hypermodified nucleoside queuosine (7-(((4,5-cis-dihydroxy-2-cyclopenten-1-yl)amino)methyl)-7-deazaguanosine).</text>
</comment>
<comment type="catalytic activity">
    <reaction evidence="1">
        <text>7-aminomethyl-7-carbaguanine + guanosine(34) in tRNA = 7-aminomethyl-7-carbaguanosine(34) in tRNA + guanine</text>
        <dbReference type="Rhea" id="RHEA:24104"/>
        <dbReference type="Rhea" id="RHEA-COMP:10341"/>
        <dbReference type="Rhea" id="RHEA-COMP:10342"/>
        <dbReference type="ChEBI" id="CHEBI:16235"/>
        <dbReference type="ChEBI" id="CHEBI:58703"/>
        <dbReference type="ChEBI" id="CHEBI:74269"/>
        <dbReference type="ChEBI" id="CHEBI:82833"/>
        <dbReference type="EC" id="2.4.2.29"/>
    </reaction>
</comment>
<comment type="cofactor">
    <cofactor evidence="1">
        <name>Zn(2+)</name>
        <dbReference type="ChEBI" id="CHEBI:29105"/>
    </cofactor>
    <text evidence="1">Binds 1 zinc ion per subunit.</text>
</comment>
<comment type="pathway">
    <text evidence="1">tRNA modification; tRNA-queuosine biosynthesis.</text>
</comment>
<comment type="subunit">
    <text evidence="1">Homodimer. Within each dimer, one monomer is responsible for RNA recognition and catalysis, while the other monomer binds to the replacement base PreQ1.</text>
</comment>
<comment type="similarity">
    <text evidence="1">Belongs to the queuine tRNA-ribosyltransferase family.</text>
</comment>
<accession>O32053</accession>
<name>TGT_BACSU</name>
<feature type="chain" id="PRO_0000135452" description="Queuine tRNA-ribosyltransferase">
    <location>
        <begin position="1"/>
        <end position="381"/>
    </location>
</feature>
<feature type="region of interest" description="RNA binding" evidence="1">
    <location>
        <begin position="251"/>
        <end position="257"/>
    </location>
</feature>
<feature type="region of interest" description="RNA binding; important for wobble base 34 recognition" evidence="1">
    <location>
        <begin position="275"/>
        <end position="279"/>
    </location>
</feature>
<feature type="active site" description="Proton acceptor" evidence="1">
    <location>
        <position position="96"/>
    </location>
</feature>
<feature type="active site" description="Nucleophile" evidence="1">
    <location>
        <position position="270"/>
    </location>
</feature>
<feature type="binding site" evidence="1">
    <location>
        <begin position="96"/>
        <end position="100"/>
    </location>
    <ligand>
        <name>substrate</name>
    </ligand>
</feature>
<feature type="binding site" evidence="1">
    <location>
        <position position="150"/>
    </location>
    <ligand>
        <name>substrate</name>
    </ligand>
</feature>
<feature type="binding site" evidence="1">
    <location>
        <position position="193"/>
    </location>
    <ligand>
        <name>substrate</name>
    </ligand>
</feature>
<feature type="binding site" evidence="1">
    <location>
        <position position="220"/>
    </location>
    <ligand>
        <name>substrate</name>
    </ligand>
</feature>
<feature type="binding site" evidence="1">
    <location>
        <position position="308"/>
    </location>
    <ligand>
        <name>Zn(2+)</name>
        <dbReference type="ChEBI" id="CHEBI:29105"/>
    </ligand>
</feature>
<feature type="binding site" evidence="1">
    <location>
        <position position="310"/>
    </location>
    <ligand>
        <name>Zn(2+)</name>
        <dbReference type="ChEBI" id="CHEBI:29105"/>
    </ligand>
</feature>
<feature type="binding site" evidence="1">
    <location>
        <position position="313"/>
    </location>
    <ligand>
        <name>Zn(2+)</name>
        <dbReference type="ChEBI" id="CHEBI:29105"/>
    </ligand>
</feature>
<feature type="binding site" evidence="1">
    <location>
        <position position="339"/>
    </location>
    <ligand>
        <name>Zn(2+)</name>
        <dbReference type="ChEBI" id="CHEBI:29105"/>
    </ligand>
</feature>
<reference key="1">
    <citation type="submission" date="1997-12" db="EMBL/GenBank/DDBJ databases">
        <title>A 17.8 kb segment in the spoVB-nadC region of the Bacillus subtilis 168 chromosome: sequencing and ruv operon identification.</title>
        <authorList>
            <person name="Tosato V."/>
            <person name="Bolotin A."/>
            <person name="Bertani I."/>
            <person name="Valentino I."/>
            <person name="Bruschi C.V."/>
        </authorList>
    </citation>
    <scope>NUCLEOTIDE SEQUENCE [GENOMIC DNA]</scope>
    <source>
        <strain>168</strain>
    </source>
</reference>
<reference key="2">
    <citation type="journal article" date="1997" name="Nature">
        <title>The complete genome sequence of the Gram-positive bacterium Bacillus subtilis.</title>
        <authorList>
            <person name="Kunst F."/>
            <person name="Ogasawara N."/>
            <person name="Moszer I."/>
            <person name="Albertini A.M."/>
            <person name="Alloni G."/>
            <person name="Azevedo V."/>
            <person name="Bertero M.G."/>
            <person name="Bessieres P."/>
            <person name="Bolotin A."/>
            <person name="Borchert S."/>
            <person name="Borriss R."/>
            <person name="Boursier L."/>
            <person name="Brans A."/>
            <person name="Braun M."/>
            <person name="Brignell S.C."/>
            <person name="Bron S."/>
            <person name="Brouillet S."/>
            <person name="Bruschi C.V."/>
            <person name="Caldwell B."/>
            <person name="Capuano V."/>
            <person name="Carter N.M."/>
            <person name="Choi S.-K."/>
            <person name="Codani J.-J."/>
            <person name="Connerton I.F."/>
            <person name="Cummings N.J."/>
            <person name="Daniel R.A."/>
            <person name="Denizot F."/>
            <person name="Devine K.M."/>
            <person name="Duesterhoeft A."/>
            <person name="Ehrlich S.D."/>
            <person name="Emmerson P.T."/>
            <person name="Entian K.-D."/>
            <person name="Errington J."/>
            <person name="Fabret C."/>
            <person name="Ferrari E."/>
            <person name="Foulger D."/>
            <person name="Fritz C."/>
            <person name="Fujita M."/>
            <person name="Fujita Y."/>
            <person name="Fuma S."/>
            <person name="Galizzi A."/>
            <person name="Galleron N."/>
            <person name="Ghim S.-Y."/>
            <person name="Glaser P."/>
            <person name="Goffeau A."/>
            <person name="Golightly E.J."/>
            <person name="Grandi G."/>
            <person name="Guiseppi G."/>
            <person name="Guy B.J."/>
            <person name="Haga K."/>
            <person name="Haiech J."/>
            <person name="Harwood C.R."/>
            <person name="Henaut A."/>
            <person name="Hilbert H."/>
            <person name="Holsappel S."/>
            <person name="Hosono S."/>
            <person name="Hullo M.-F."/>
            <person name="Itaya M."/>
            <person name="Jones L.-M."/>
            <person name="Joris B."/>
            <person name="Karamata D."/>
            <person name="Kasahara Y."/>
            <person name="Klaerr-Blanchard M."/>
            <person name="Klein C."/>
            <person name="Kobayashi Y."/>
            <person name="Koetter P."/>
            <person name="Koningstein G."/>
            <person name="Krogh S."/>
            <person name="Kumano M."/>
            <person name="Kurita K."/>
            <person name="Lapidus A."/>
            <person name="Lardinois S."/>
            <person name="Lauber J."/>
            <person name="Lazarevic V."/>
            <person name="Lee S.-M."/>
            <person name="Levine A."/>
            <person name="Liu H."/>
            <person name="Masuda S."/>
            <person name="Mauel C."/>
            <person name="Medigue C."/>
            <person name="Medina N."/>
            <person name="Mellado R.P."/>
            <person name="Mizuno M."/>
            <person name="Moestl D."/>
            <person name="Nakai S."/>
            <person name="Noback M."/>
            <person name="Noone D."/>
            <person name="O'Reilly M."/>
            <person name="Ogawa K."/>
            <person name="Ogiwara A."/>
            <person name="Oudega B."/>
            <person name="Park S.-H."/>
            <person name="Parro V."/>
            <person name="Pohl T.M."/>
            <person name="Portetelle D."/>
            <person name="Porwollik S."/>
            <person name="Prescott A.M."/>
            <person name="Presecan E."/>
            <person name="Pujic P."/>
            <person name="Purnelle B."/>
            <person name="Rapoport G."/>
            <person name="Rey M."/>
            <person name="Reynolds S."/>
            <person name="Rieger M."/>
            <person name="Rivolta C."/>
            <person name="Rocha E."/>
            <person name="Roche B."/>
            <person name="Rose M."/>
            <person name="Sadaie Y."/>
            <person name="Sato T."/>
            <person name="Scanlan E."/>
            <person name="Schleich S."/>
            <person name="Schroeter R."/>
            <person name="Scoffone F."/>
            <person name="Sekiguchi J."/>
            <person name="Sekowska A."/>
            <person name="Seror S.J."/>
            <person name="Serror P."/>
            <person name="Shin B.-S."/>
            <person name="Soldo B."/>
            <person name="Sorokin A."/>
            <person name="Tacconi E."/>
            <person name="Takagi T."/>
            <person name="Takahashi H."/>
            <person name="Takemaru K."/>
            <person name="Takeuchi M."/>
            <person name="Tamakoshi A."/>
            <person name="Tanaka T."/>
            <person name="Terpstra P."/>
            <person name="Tognoni A."/>
            <person name="Tosato V."/>
            <person name="Uchiyama S."/>
            <person name="Vandenbol M."/>
            <person name="Vannier F."/>
            <person name="Vassarotti A."/>
            <person name="Viari A."/>
            <person name="Wambutt R."/>
            <person name="Wedler E."/>
            <person name="Wedler H."/>
            <person name="Weitzenegger T."/>
            <person name="Winters P."/>
            <person name="Wipat A."/>
            <person name="Yamamoto H."/>
            <person name="Yamane K."/>
            <person name="Yasumoto K."/>
            <person name="Yata K."/>
            <person name="Yoshida K."/>
            <person name="Yoshikawa H.-F."/>
            <person name="Zumstein E."/>
            <person name="Yoshikawa H."/>
            <person name="Danchin A."/>
        </authorList>
    </citation>
    <scope>NUCLEOTIDE SEQUENCE [LARGE SCALE GENOMIC DNA]</scope>
    <source>
        <strain>168</strain>
    </source>
</reference>
<gene>
    <name evidence="1" type="primary">tgt</name>
    <name type="ordered locus">BSU27710</name>
</gene>
<keyword id="KW-0328">Glycosyltransferase</keyword>
<keyword id="KW-0479">Metal-binding</keyword>
<keyword id="KW-0671">Queuosine biosynthesis</keyword>
<keyword id="KW-1185">Reference proteome</keyword>
<keyword id="KW-0808">Transferase</keyword>
<keyword id="KW-0819">tRNA processing</keyword>
<keyword id="KW-0862">Zinc</keyword>